<dbReference type="EMBL" id="Y19234">
    <property type="protein sequence ID" value="CAB81953.1"/>
    <property type="molecule type" value="mRNA"/>
</dbReference>
<dbReference type="EMBL" id="Y19235">
    <property type="protein sequence ID" value="CAB81954.1"/>
    <property type="molecule type" value="mRNA"/>
</dbReference>
<dbReference type="EMBL" id="AK017412">
    <property type="protein sequence ID" value="BAB30732.1"/>
    <property type="molecule type" value="mRNA"/>
</dbReference>
<dbReference type="EMBL" id="AK139633">
    <property type="protein sequence ID" value="BAE24089.1"/>
    <property type="molecule type" value="mRNA"/>
</dbReference>
<dbReference type="EMBL" id="AL806525">
    <property type="protein sequence ID" value="CAM18773.1"/>
    <property type="molecule type" value="Genomic_DNA"/>
</dbReference>
<dbReference type="EMBL" id="AL806525">
    <property type="protein sequence ID" value="CAM18774.1"/>
    <property type="molecule type" value="Genomic_DNA"/>
</dbReference>
<dbReference type="EMBL" id="AL806525">
    <property type="protein sequence ID" value="CAM18775.1"/>
    <property type="status" value="ALT_INIT"/>
    <property type="molecule type" value="Genomic_DNA"/>
</dbReference>
<dbReference type="EMBL" id="CH466594">
    <property type="protein sequence ID" value="EDL14957.1"/>
    <property type="molecule type" value="Genomic_DNA"/>
</dbReference>
<dbReference type="EMBL" id="BC066045">
    <property type="protein sequence ID" value="AAH66045.1"/>
    <property type="molecule type" value="mRNA"/>
</dbReference>
<dbReference type="EMBL" id="AF138873">
    <property type="protein sequence ID" value="AAD32213.1"/>
    <property type="molecule type" value="Genomic_DNA"/>
</dbReference>
<dbReference type="CCDS" id="CCDS19009.2">
    <molecule id="Q9JJP2-1"/>
</dbReference>
<dbReference type="CCDS" id="CCDS51396.1">
    <molecule id="Q9JJP2-4"/>
</dbReference>
<dbReference type="CCDS" id="CCDS51397.1">
    <molecule id="Q9JJP2-2"/>
</dbReference>
<dbReference type="RefSeq" id="NP_001119802.1">
    <molecule id="Q9JJP2-2"/>
    <property type="nucleotide sequence ID" value="NM_001126330.1"/>
</dbReference>
<dbReference type="RefSeq" id="NP_001119803.1">
    <molecule id="Q9JJP2-4"/>
    <property type="nucleotide sequence ID" value="NM_001126331.1"/>
</dbReference>
<dbReference type="RefSeq" id="NP_035772.2">
    <molecule id="Q9JJP2-1"/>
    <property type="nucleotide sequence ID" value="NM_011642.3"/>
</dbReference>
<dbReference type="SMR" id="Q9JJP2"/>
<dbReference type="BioGRID" id="204326">
    <property type="interactions" value="5"/>
</dbReference>
<dbReference type="DIP" id="DIP-41942N"/>
<dbReference type="FunCoup" id="Q9JJP2">
    <property type="interactions" value="1311"/>
</dbReference>
<dbReference type="IntAct" id="Q9JJP2">
    <property type="interactions" value="5"/>
</dbReference>
<dbReference type="MINT" id="Q9JJP2"/>
<dbReference type="STRING" id="10090.ENSMUSP00000101269"/>
<dbReference type="iPTMnet" id="Q9JJP2"/>
<dbReference type="PhosphoSitePlus" id="Q9JJP2"/>
<dbReference type="PaxDb" id="10090-ENSMUSP00000101269"/>
<dbReference type="ProteomicsDB" id="293991">
    <molecule id="Q9JJP2-1"/>
</dbReference>
<dbReference type="ProteomicsDB" id="293992">
    <molecule id="Q9JJP2-2"/>
</dbReference>
<dbReference type="ProteomicsDB" id="293993">
    <molecule id="Q9JJP2-3"/>
</dbReference>
<dbReference type="ProteomicsDB" id="293994">
    <molecule id="Q9JJP2-4"/>
</dbReference>
<dbReference type="Antibodypedia" id="3467">
    <property type="antibodies" value="1167 antibodies from 44 providers"/>
</dbReference>
<dbReference type="DNASU" id="22062"/>
<dbReference type="Ensembl" id="ENSMUST00000097762.11">
    <molecule id="Q9JJP2-4"/>
    <property type="protein sequence ID" value="ENSMUSP00000095368.5"/>
    <property type="gene ID" value="ENSMUSG00000029026.18"/>
</dbReference>
<dbReference type="Ensembl" id="ENSMUST00000105643.8">
    <molecule id="Q9JJP2-3"/>
    <property type="protein sequence ID" value="ENSMUSP00000101268.2"/>
    <property type="gene ID" value="ENSMUSG00000029026.18"/>
</dbReference>
<dbReference type="Ensembl" id="ENSMUST00000105644.10">
    <molecule id="Q9JJP2-1"/>
    <property type="protein sequence ID" value="ENSMUSP00000101269.4"/>
    <property type="gene ID" value="ENSMUSG00000029026.18"/>
</dbReference>
<dbReference type="Ensembl" id="ENSMUST00000133533.8">
    <molecule id="Q9JJP2-2"/>
    <property type="protein sequence ID" value="ENSMUSP00000114418.2"/>
    <property type="gene ID" value="ENSMUSG00000029026.18"/>
</dbReference>
<dbReference type="GeneID" id="22062"/>
<dbReference type="KEGG" id="mmu:22062"/>
<dbReference type="UCSC" id="uc008wbg.2">
    <molecule id="Q9JJP2-2"/>
    <property type="organism name" value="mouse"/>
</dbReference>
<dbReference type="UCSC" id="uc012dqi.1">
    <molecule id="Q9JJP2-4"/>
    <property type="organism name" value="mouse"/>
</dbReference>
<dbReference type="AGR" id="MGI:1336991"/>
<dbReference type="CTD" id="22062"/>
<dbReference type="MGI" id="MGI:1336991">
    <property type="gene designation" value="Trp73"/>
</dbReference>
<dbReference type="VEuPathDB" id="HostDB:ENSMUSG00000029026"/>
<dbReference type="eggNOG" id="ENOG502QQ48">
    <property type="taxonomic scope" value="Eukaryota"/>
</dbReference>
<dbReference type="GeneTree" id="ENSGT00950000183153"/>
<dbReference type="HOGENOM" id="CLU_019621_1_1_1"/>
<dbReference type="InParanoid" id="Q9JJP2"/>
<dbReference type="OMA" id="PSNGEMN"/>
<dbReference type="OrthoDB" id="5915660at2759"/>
<dbReference type="PhylomeDB" id="Q9JJP2"/>
<dbReference type="TreeFam" id="TF106101"/>
<dbReference type="Reactome" id="R-MMU-6804759">
    <property type="pathway name" value="Regulation of TP53 Activity through Association with Co-factors"/>
</dbReference>
<dbReference type="Reactome" id="R-MMU-8939236">
    <property type="pathway name" value="RUNX1 regulates transcription of genes involved in differentiation of HSCs"/>
</dbReference>
<dbReference type="BioGRID-ORCS" id="22062">
    <property type="hits" value="2 hits in 80 CRISPR screens"/>
</dbReference>
<dbReference type="ChiTaRS" id="Trp73">
    <property type="organism name" value="mouse"/>
</dbReference>
<dbReference type="PRO" id="PR:Q9JJP2"/>
<dbReference type="Proteomes" id="UP000000589">
    <property type="component" value="Chromosome 4"/>
</dbReference>
<dbReference type="RNAct" id="Q9JJP2">
    <property type="molecule type" value="protein"/>
</dbReference>
<dbReference type="Bgee" id="ENSMUSG00000029026">
    <property type="expression patterns" value="Expressed in telencephalon lateral wall and 64 other cell types or tissues"/>
</dbReference>
<dbReference type="ExpressionAtlas" id="Q9JJP2">
    <property type="expression patterns" value="baseline and differential"/>
</dbReference>
<dbReference type="GO" id="GO:0030054">
    <property type="term" value="C:cell junction"/>
    <property type="evidence" value="ECO:0007669"/>
    <property type="project" value="Ensembl"/>
</dbReference>
<dbReference type="GO" id="GO:0005813">
    <property type="term" value="C:centrosome"/>
    <property type="evidence" value="ECO:0007669"/>
    <property type="project" value="Ensembl"/>
</dbReference>
<dbReference type="GO" id="GO:0000785">
    <property type="term" value="C:chromatin"/>
    <property type="evidence" value="ECO:0007669"/>
    <property type="project" value="Ensembl"/>
</dbReference>
<dbReference type="GO" id="GO:0036064">
    <property type="term" value="C:ciliary basal body"/>
    <property type="evidence" value="ECO:0007669"/>
    <property type="project" value="Ensembl"/>
</dbReference>
<dbReference type="GO" id="GO:0005794">
    <property type="term" value="C:Golgi apparatus"/>
    <property type="evidence" value="ECO:0007669"/>
    <property type="project" value="Ensembl"/>
</dbReference>
<dbReference type="GO" id="GO:0005654">
    <property type="term" value="C:nucleoplasm"/>
    <property type="evidence" value="ECO:0007669"/>
    <property type="project" value="Ensembl"/>
</dbReference>
<dbReference type="GO" id="GO:0005634">
    <property type="term" value="C:nucleus"/>
    <property type="evidence" value="ECO:0000314"/>
    <property type="project" value="ParkinsonsUK-UCL"/>
</dbReference>
<dbReference type="GO" id="GO:0005886">
    <property type="term" value="C:plasma membrane"/>
    <property type="evidence" value="ECO:0007669"/>
    <property type="project" value="Ensembl"/>
</dbReference>
<dbReference type="GO" id="GO:0003677">
    <property type="term" value="F:DNA binding"/>
    <property type="evidence" value="ECO:0000314"/>
    <property type="project" value="MGI"/>
</dbReference>
<dbReference type="GO" id="GO:0001228">
    <property type="term" value="F:DNA-binding transcription activator activity, RNA polymerase II-specific"/>
    <property type="evidence" value="ECO:0007669"/>
    <property type="project" value="Ensembl"/>
</dbReference>
<dbReference type="GO" id="GO:0003700">
    <property type="term" value="F:DNA-binding transcription factor activity"/>
    <property type="evidence" value="ECO:0000314"/>
    <property type="project" value="MGI"/>
</dbReference>
<dbReference type="GO" id="GO:0000981">
    <property type="term" value="F:DNA-binding transcription factor activity, RNA polymerase II-specific"/>
    <property type="evidence" value="ECO:0000250"/>
    <property type="project" value="UniProtKB"/>
</dbReference>
<dbReference type="GO" id="GO:0042802">
    <property type="term" value="F:identical protein binding"/>
    <property type="evidence" value="ECO:0007669"/>
    <property type="project" value="Ensembl"/>
</dbReference>
<dbReference type="GO" id="GO:0097371">
    <property type="term" value="F:MDM2/MDM4 family protein binding"/>
    <property type="evidence" value="ECO:0007669"/>
    <property type="project" value="Ensembl"/>
</dbReference>
<dbReference type="GO" id="GO:0046872">
    <property type="term" value="F:metal ion binding"/>
    <property type="evidence" value="ECO:0007669"/>
    <property type="project" value="UniProtKB-KW"/>
</dbReference>
<dbReference type="GO" id="GO:0002039">
    <property type="term" value="F:p53 binding"/>
    <property type="evidence" value="ECO:0000353"/>
    <property type="project" value="MGI"/>
</dbReference>
<dbReference type="GO" id="GO:0019901">
    <property type="term" value="F:protein kinase binding"/>
    <property type="evidence" value="ECO:0007669"/>
    <property type="project" value="Ensembl"/>
</dbReference>
<dbReference type="GO" id="GO:0000978">
    <property type="term" value="F:RNA polymerase II cis-regulatory region sequence-specific DNA binding"/>
    <property type="evidence" value="ECO:0007669"/>
    <property type="project" value="Ensembl"/>
</dbReference>
<dbReference type="GO" id="GO:0061629">
    <property type="term" value="F:RNA polymerase II-specific DNA-binding transcription factor binding"/>
    <property type="evidence" value="ECO:0007669"/>
    <property type="project" value="Ensembl"/>
</dbReference>
<dbReference type="GO" id="GO:0033326">
    <property type="term" value="P:cerebrospinal fluid secretion"/>
    <property type="evidence" value="ECO:0000315"/>
    <property type="project" value="MGI"/>
</dbReference>
<dbReference type="GO" id="GO:0048546">
    <property type="term" value="P:digestive tract morphogenesis"/>
    <property type="evidence" value="ECO:0000315"/>
    <property type="project" value="MGI"/>
</dbReference>
<dbReference type="GO" id="GO:0006974">
    <property type="term" value="P:DNA damage response"/>
    <property type="evidence" value="ECO:0000315"/>
    <property type="project" value="MGI"/>
</dbReference>
<dbReference type="GO" id="GO:0030900">
    <property type="term" value="P:forebrain development"/>
    <property type="evidence" value="ECO:0000315"/>
    <property type="project" value="MGI"/>
</dbReference>
<dbReference type="GO" id="GO:0021766">
    <property type="term" value="P:hippocampus development"/>
    <property type="evidence" value="ECO:0000315"/>
    <property type="project" value="MGI"/>
</dbReference>
<dbReference type="GO" id="GO:0006954">
    <property type="term" value="P:inflammatory response"/>
    <property type="evidence" value="ECO:0000315"/>
    <property type="project" value="MGI"/>
</dbReference>
<dbReference type="GO" id="GO:0042771">
    <property type="term" value="P:intrinsic apoptotic signaling pathway in response to DNA damage by p53 class mediator"/>
    <property type="evidence" value="ECO:0000316"/>
    <property type="project" value="MGI"/>
</dbReference>
<dbReference type="GO" id="GO:0001822">
    <property type="term" value="P:kidney development"/>
    <property type="evidence" value="ECO:0007669"/>
    <property type="project" value="Ensembl"/>
</dbReference>
<dbReference type="GO" id="GO:0060044">
    <property type="term" value="P:negative regulation of cardiac muscle cell proliferation"/>
    <property type="evidence" value="ECO:0000266"/>
    <property type="project" value="MGI"/>
</dbReference>
<dbReference type="GO" id="GO:0043524">
    <property type="term" value="P:negative regulation of neuron apoptotic process"/>
    <property type="evidence" value="ECO:0000314"/>
    <property type="project" value="MGI"/>
</dbReference>
<dbReference type="GO" id="GO:0045665">
    <property type="term" value="P:negative regulation of neuron differentiation"/>
    <property type="evidence" value="ECO:0007669"/>
    <property type="project" value="Ensembl"/>
</dbReference>
<dbReference type="GO" id="GO:0048666">
    <property type="term" value="P:neuron development"/>
    <property type="evidence" value="ECO:0000315"/>
    <property type="project" value="MGI"/>
</dbReference>
<dbReference type="GO" id="GO:2001235">
    <property type="term" value="P:positive regulation of apoptotic signaling pathway"/>
    <property type="evidence" value="ECO:0000316"/>
    <property type="project" value="MGI"/>
</dbReference>
<dbReference type="GO" id="GO:0045793">
    <property type="term" value="P:positive regulation of cell size"/>
    <property type="evidence" value="ECO:0000315"/>
    <property type="project" value="MGI"/>
</dbReference>
<dbReference type="GO" id="GO:0045893">
    <property type="term" value="P:positive regulation of DNA-templated transcription"/>
    <property type="evidence" value="ECO:0000314"/>
    <property type="project" value="MGI"/>
</dbReference>
<dbReference type="GO" id="GO:1902167">
    <property type="term" value="P:positive regulation of intrinsic apoptotic signaling pathway in response to DNA damage by p53 class mediator"/>
    <property type="evidence" value="ECO:0000316"/>
    <property type="project" value="MGI"/>
</dbReference>
<dbReference type="GO" id="GO:1901248">
    <property type="term" value="P:positive regulation of lung ciliated cell differentiation"/>
    <property type="evidence" value="ECO:0007669"/>
    <property type="project" value="Ensembl"/>
</dbReference>
<dbReference type="GO" id="GO:0043410">
    <property type="term" value="P:positive regulation of MAPK cascade"/>
    <property type="evidence" value="ECO:0007669"/>
    <property type="project" value="Ensembl"/>
</dbReference>
<dbReference type="GO" id="GO:0048714">
    <property type="term" value="P:positive regulation of oligodendrocyte differentiation"/>
    <property type="evidence" value="ECO:0007669"/>
    <property type="project" value="Ensembl"/>
</dbReference>
<dbReference type="GO" id="GO:0045944">
    <property type="term" value="P:positive regulation of transcription by RNA polymerase II"/>
    <property type="evidence" value="ECO:0000250"/>
    <property type="project" value="UniProtKB"/>
</dbReference>
<dbReference type="GO" id="GO:0009791">
    <property type="term" value="P:post-embryonic development"/>
    <property type="evidence" value="ECO:0000315"/>
    <property type="project" value="MGI"/>
</dbReference>
<dbReference type="GO" id="GO:0051262">
    <property type="term" value="P:protein tetramerization"/>
    <property type="evidence" value="ECO:0007669"/>
    <property type="project" value="InterPro"/>
</dbReference>
<dbReference type="GO" id="GO:0010468">
    <property type="term" value="P:regulation of gene expression"/>
    <property type="evidence" value="ECO:0000266"/>
    <property type="project" value="MGI"/>
</dbReference>
<dbReference type="GO" id="GO:0007346">
    <property type="term" value="P:regulation of mitotic cell cycle"/>
    <property type="evidence" value="ECO:0000266"/>
    <property type="project" value="MGI"/>
</dbReference>
<dbReference type="GO" id="GO:0043523">
    <property type="term" value="P:regulation of neuron apoptotic process"/>
    <property type="evidence" value="ECO:0000316"/>
    <property type="project" value="MGI"/>
</dbReference>
<dbReference type="GO" id="GO:0001836">
    <property type="term" value="P:release of cytochrome c from mitochondria"/>
    <property type="evidence" value="ECO:0000314"/>
    <property type="project" value="MGI"/>
</dbReference>
<dbReference type="GO" id="GO:0009410">
    <property type="term" value="P:response to xenobiotic stimulus"/>
    <property type="evidence" value="ECO:0007669"/>
    <property type="project" value="Ensembl"/>
</dbReference>
<dbReference type="CDD" id="cd08367">
    <property type="entry name" value="P53"/>
    <property type="match status" value="1"/>
</dbReference>
<dbReference type="CDD" id="cd09571">
    <property type="entry name" value="SAM_tumor-p73"/>
    <property type="match status" value="1"/>
</dbReference>
<dbReference type="FunFam" id="2.60.40.720:FF:000002">
    <property type="entry name" value="Cellular tumor antigen p53"/>
    <property type="match status" value="1"/>
</dbReference>
<dbReference type="FunFam" id="4.10.170.10:FF:000001">
    <property type="entry name" value="Cellular tumor antigen p53"/>
    <property type="match status" value="1"/>
</dbReference>
<dbReference type="FunFam" id="1.10.150.50:FF:000020">
    <property type="entry name" value="Tumor protein 63 (p63)"/>
    <property type="match status" value="1"/>
</dbReference>
<dbReference type="Gene3D" id="2.60.40.720">
    <property type="match status" value="1"/>
</dbReference>
<dbReference type="Gene3D" id="4.10.170.10">
    <property type="entry name" value="p53-like tetramerisation domain"/>
    <property type="match status" value="1"/>
</dbReference>
<dbReference type="Gene3D" id="1.10.150.50">
    <property type="entry name" value="Transcription Factor, Ets-1"/>
    <property type="match status" value="1"/>
</dbReference>
<dbReference type="InterPro" id="IPR008967">
    <property type="entry name" value="p53-like_TF_DNA-bd_sf"/>
</dbReference>
<dbReference type="InterPro" id="IPR012346">
    <property type="entry name" value="p53/RUNT-type_TF_DNA-bd_sf"/>
</dbReference>
<dbReference type="InterPro" id="IPR011615">
    <property type="entry name" value="p53_DNA-bd"/>
</dbReference>
<dbReference type="InterPro" id="IPR036674">
    <property type="entry name" value="p53_tetramer_sf"/>
</dbReference>
<dbReference type="InterPro" id="IPR010991">
    <property type="entry name" value="p53_tetrameristn"/>
</dbReference>
<dbReference type="InterPro" id="IPR002117">
    <property type="entry name" value="p53_tumour_suppressor"/>
</dbReference>
<dbReference type="InterPro" id="IPR001660">
    <property type="entry name" value="SAM"/>
</dbReference>
<dbReference type="InterPro" id="IPR013761">
    <property type="entry name" value="SAM/pointed_sf"/>
</dbReference>
<dbReference type="InterPro" id="IPR037612">
    <property type="entry name" value="Tumour-p73_SAM"/>
</dbReference>
<dbReference type="PANTHER" id="PTHR11447">
    <property type="entry name" value="CELLULAR TUMOR ANTIGEN P53"/>
    <property type="match status" value="1"/>
</dbReference>
<dbReference type="PANTHER" id="PTHR11447:SF21">
    <property type="entry name" value="TUMOR PROTEIN P73"/>
    <property type="match status" value="1"/>
</dbReference>
<dbReference type="Pfam" id="PF00870">
    <property type="entry name" value="P53"/>
    <property type="match status" value="1"/>
</dbReference>
<dbReference type="Pfam" id="PF07710">
    <property type="entry name" value="P53_tetramer"/>
    <property type="match status" value="1"/>
</dbReference>
<dbReference type="PRINTS" id="PR00386">
    <property type="entry name" value="P53SUPPRESSR"/>
</dbReference>
<dbReference type="SMART" id="SM00454">
    <property type="entry name" value="SAM"/>
    <property type="match status" value="1"/>
</dbReference>
<dbReference type="SUPFAM" id="SSF47719">
    <property type="entry name" value="p53 tetramerization domain"/>
    <property type="match status" value="1"/>
</dbReference>
<dbReference type="SUPFAM" id="SSF49417">
    <property type="entry name" value="p53-like transcription factors"/>
    <property type="match status" value="1"/>
</dbReference>
<dbReference type="SUPFAM" id="SSF47769">
    <property type="entry name" value="SAM/Pointed domain"/>
    <property type="match status" value="1"/>
</dbReference>
<dbReference type="PROSITE" id="PS00348">
    <property type="entry name" value="P53"/>
    <property type="match status" value="1"/>
</dbReference>
<accession>Q9JJP2</accession>
<accession>B1AX89</accession>
<accession>B1AX90</accession>
<accession>Q3UT91</accession>
<accession>Q9CU77</accession>
<accession>Q9JJP1</accession>
<accession>Q9WUJ0</accession>
<gene>
    <name type="primary">Tp73</name>
    <name evidence="21" type="synonym">P73</name>
    <name evidence="23" type="synonym">Trp73</name>
</gene>
<reference evidence="16 21" key="1">
    <citation type="journal article" date="2000" name="Nature">
        <title>p73-deficient mice have neurological, pheromonal and inflammatory defects but lack spontaneous tumours.</title>
        <authorList>
            <person name="Yang A."/>
            <person name="Walker N."/>
            <person name="Bronson R."/>
            <person name="Kaghad M."/>
            <person name="Oosterwegel M."/>
            <person name="Bonnin J."/>
            <person name="Vagner C."/>
            <person name="Bonnet H."/>
            <person name="Dikkes P."/>
            <person name="Sharpe A."/>
            <person name="McKeon F."/>
            <person name="Caput D."/>
        </authorList>
    </citation>
    <scope>NUCLEOTIDE SEQUENCE [MRNA] (ISOFORMS 1 AND 2)</scope>
    <scope>ALTERNATIVE PROMOTER USAGE</scope>
    <scope>TISSUE SPECIFICITY</scope>
    <scope>DISRUPTION PHENOTYPE</scope>
</reference>
<reference evidence="16 19" key="2">
    <citation type="journal article" date="2005" name="Science">
        <title>The transcriptional landscape of the mammalian genome.</title>
        <authorList>
            <person name="Carninci P."/>
            <person name="Kasukawa T."/>
            <person name="Katayama S."/>
            <person name="Gough J."/>
            <person name="Frith M.C."/>
            <person name="Maeda N."/>
            <person name="Oyama R."/>
            <person name="Ravasi T."/>
            <person name="Lenhard B."/>
            <person name="Wells C."/>
            <person name="Kodzius R."/>
            <person name="Shimokawa K."/>
            <person name="Bajic V.B."/>
            <person name="Brenner S.E."/>
            <person name="Batalov S."/>
            <person name="Forrest A.R."/>
            <person name="Zavolan M."/>
            <person name="Davis M.J."/>
            <person name="Wilming L.G."/>
            <person name="Aidinis V."/>
            <person name="Allen J.E."/>
            <person name="Ambesi-Impiombato A."/>
            <person name="Apweiler R."/>
            <person name="Aturaliya R.N."/>
            <person name="Bailey T.L."/>
            <person name="Bansal M."/>
            <person name="Baxter L."/>
            <person name="Beisel K.W."/>
            <person name="Bersano T."/>
            <person name="Bono H."/>
            <person name="Chalk A.M."/>
            <person name="Chiu K.P."/>
            <person name="Choudhary V."/>
            <person name="Christoffels A."/>
            <person name="Clutterbuck D.R."/>
            <person name="Crowe M.L."/>
            <person name="Dalla E."/>
            <person name="Dalrymple B.P."/>
            <person name="de Bono B."/>
            <person name="Della Gatta G."/>
            <person name="di Bernardo D."/>
            <person name="Down T."/>
            <person name="Engstrom P."/>
            <person name="Fagiolini M."/>
            <person name="Faulkner G."/>
            <person name="Fletcher C.F."/>
            <person name="Fukushima T."/>
            <person name="Furuno M."/>
            <person name="Futaki S."/>
            <person name="Gariboldi M."/>
            <person name="Georgii-Hemming P."/>
            <person name="Gingeras T.R."/>
            <person name="Gojobori T."/>
            <person name="Green R.E."/>
            <person name="Gustincich S."/>
            <person name="Harbers M."/>
            <person name="Hayashi Y."/>
            <person name="Hensch T.K."/>
            <person name="Hirokawa N."/>
            <person name="Hill D."/>
            <person name="Huminiecki L."/>
            <person name="Iacono M."/>
            <person name="Ikeo K."/>
            <person name="Iwama A."/>
            <person name="Ishikawa T."/>
            <person name="Jakt M."/>
            <person name="Kanapin A."/>
            <person name="Katoh M."/>
            <person name="Kawasawa Y."/>
            <person name="Kelso J."/>
            <person name="Kitamura H."/>
            <person name="Kitano H."/>
            <person name="Kollias G."/>
            <person name="Krishnan S.P."/>
            <person name="Kruger A."/>
            <person name="Kummerfeld S.K."/>
            <person name="Kurochkin I.V."/>
            <person name="Lareau L.F."/>
            <person name="Lazarevic D."/>
            <person name="Lipovich L."/>
            <person name="Liu J."/>
            <person name="Liuni S."/>
            <person name="McWilliam S."/>
            <person name="Madan Babu M."/>
            <person name="Madera M."/>
            <person name="Marchionni L."/>
            <person name="Matsuda H."/>
            <person name="Matsuzawa S."/>
            <person name="Miki H."/>
            <person name="Mignone F."/>
            <person name="Miyake S."/>
            <person name="Morris K."/>
            <person name="Mottagui-Tabar S."/>
            <person name="Mulder N."/>
            <person name="Nakano N."/>
            <person name="Nakauchi H."/>
            <person name="Ng P."/>
            <person name="Nilsson R."/>
            <person name="Nishiguchi S."/>
            <person name="Nishikawa S."/>
            <person name="Nori F."/>
            <person name="Ohara O."/>
            <person name="Okazaki Y."/>
            <person name="Orlando V."/>
            <person name="Pang K.C."/>
            <person name="Pavan W.J."/>
            <person name="Pavesi G."/>
            <person name="Pesole G."/>
            <person name="Petrovsky N."/>
            <person name="Piazza S."/>
            <person name="Reed J."/>
            <person name="Reid J.F."/>
            <person name="Ring B.Z."/>
            <person name="Ringwald M."/>
            <person name="Rost B."/>
            <person name="Ruan Y."/>
            <person name="Salzberg S.L."/>
            <person name="Sandelin A."/>
            <person name="Schneider C."/>
            <person name="Schoenbach C."/>
            <person name="Sekiguchi K."/>
            <person name="Semple C.A."/>
            <person name="Seno S."/>
            <person name="Sessa L."/>
            <person name="Sheng Y."/>
            <person name="Shibata Y."/>
            <person name="Shimada H."/>
            <person name="Shimada K."/>
            <person name="Silva D."/>
            <person name="Sinclair B."/>
            <person name="Sperling S."/>
            <person name="Stupka E."/>
            <person name="Sugiura K."/>
            <person name="Sultana R."/>
            <person name="Takenaka Y."/>
            <person name="Taki K."/>
            <person name="Tammoja K."/>
            <person name="Tan S.L."/>
            <person name="Tang S."/>
            <person name="Taylor M.S."/>
            <person name="Tegner J."/>
            <person name="Teichmann S.A."/>
            <person name="Ueda H.R."/>
            <person name="van Nimwegen E."/>
            <person name="Verardo R."/>
            <person name="Wei C.L."/>
            <person name="Yagi K."/>
            <person name="Yamanishi H."/>
            <person name="Zabarovsky E."/>
            <person name="Zhu S."/>
            <person name="Zimmer A."/>
            <person name="Hide W."/>
            <person name="Bult C."/>
            <person name="Grimmond S.M."/>
            <person name="Teasdale R.D."/>
            <person name="Liu E.T."/>
            <person name="Brusic V."/>
            <person name="Quackenbush J."/>
            <person name="Wahlestedt C."/>
            <person name="Mattick J.S."/>
            <person name="Hume D.A."/>
            <person name="Kai C."/>
            <person name="Sasaki D."/>
            <person name="Tomaru Y."/>
            <person name="Fukuda S."/>
            <person name="Kanamori-Katayama M."/>
            <person name="Suzuki M."/>
            <person name="Aoki J."/>
            <person name="Arakawa T."/>
            <person name="Iida J."/>
            <person name="Imamura K."/>
            <person name="Itoh M."/>
            <person name="Kato T."/>
            <person name="Kawaji H."/>
            <person name="Kawagashira N."/>
            <person name="Kawashima T."/>
            <person name="Kojima M."/>
            <person name="Kondo S."/>
            <person name="Konno H."/>
            <person name="Nakano K."/>
            <person name="Ninomiya N."/>
            <person name="Nishio T."/>
            <person name="Okada M."/>
            <person name="Plessy C."/>
            <person name="Shibata K."/>
            <person name="Shiraki T."/>
            <person name="Suzuki S."/>
            <person name="Tagami M."/>
            <person name="Waki K."/>
            <person name="Watahiki A."/>
            <person name="Okamura-Oho Y."/>
            <person name="Suzuki H."/>
            <person name="Kawai J."/>
            <person name="Hayashizaki Y."/>
        </authorList>
    </citation>
    <scope>NUCLEOTIDE SEQUENCE [LARGE SCALE MRNA] (ISOFORM 4)</scope>
    <scope>NUCLEOTIDE SEQUENCE [LARGE SCALE MRNA] OF 118-631 (ISOFORM 1/2)</scope>
    <source>
        <strain evidence="19">C57BL/6J</strain>
        <tissue evidence="20">Egg</tissue>
        <tissue evidence="19">Head</tissue>
    </source>
</reference>
<reference key="3">
    <citation type="journal article" date="2009" name="PLoS Biol.">
        <title>Lineage-specific biology revealed by a finished genome assembly of the mouse.</title>
        <authorList>
            <person name="Church D.M."/>
            <person name="Goodstadt L."/>
            <person name="Hillier L.W."/>
            <person name="Zody M.C."/>
            <person name="Goldstein S."/>
            <person name="She X."/>
            <person name="Bult C.J."/>
            <person name="Agarwala R."/>
            <person name="Cherry J.L."/>
            <person name="DiCuccio M."/>
            <person name="Hlavina W."/>
            <person name="Kapustin Y."/>
            <person name="Meric P."/>
            <person name="Maglott D."/>
            <person name="Birtle Z."/>
            <person name="Marques A.C."/>
            <person name="Graves T."/>
            <person name="Zhou S."/>
            <person name="Teague B."/>
            <person name="Potamousis K."/>
            <person name="Churas C."/>
            <person name="Place M."/>
            <person name="Herschleb J."/>
            <person name="Runnheim R."/>
            <person name="Forrest D."/>
            <person name="Amos-Landgraf J."/>
            <person name="Schwartz D.C."/>
            <person name="Cheng Z."/>
            <person name="Lindblad-Toh K."/>
            <person name="Eichler E.E."/>
            <person name="Ponting C.P."/>
        </authorList>
    </citation>
    <scope>NUCLEOTIDE SEQUENCE [LARGE SCALE GENOMIC DNA]</scope>
</reference>
<reference evidence="22" key="4">
    <citation type="submission" date="2005-07" db="EMBL/GenBank/DDBJ databases">
        <authorList>
            <person name="Mural R.J."/>
            <person name="Adams M.D."/>
            <person name="Myers E.W."/>
            <person name="Smith H.O."/>
            <person name="Venter J.C."/>
        </authorList>
    </citation>
    <scope>NUCLEOTIDE SEQUENCE [LARGE SCALE GENOMIC DNA]</scope>
</reference>
<reference evidence="16 18" key="5">
    <citation type="journal article" date="2004" name="Genome Res.">
        <title>The status, quality, and expansion of the NIH full-length cDNA project: the Mammalian Gene Collection (MGC).</title>
        <authorList>
            <consortium name="The MGC Project Team"/>
        </authorList>
    </citation>
    <scope>NUCLEOTIDE SEQUENCE [LARGE SCALE MRNA] (ISOFORM 2)</scope>
    <source>
        <strain evidence="18">C57BL/6J</strain>
        <tissue evidence="18">Fetal brain</tissue>
    </source>
</reference>
<reference evidence="16 17" key="6">
    <citation type="journal article" date="1999" name="Cancer Res.">
        <title>Mouse p73 gene maps to the distal part of chromosome 4 and might be involved in the progression of gamma-radiation-induced T-cell lymphomas.</title>
        <authorList>
            <person name="Herranz M."/>
            <person name="Santos J."/>
            <person name="Salido E."/>
            <person name="Fernandez-Piqueras J."/>
            <person name="Serrano M."/>
        </authorList>
    </citation>
    <scope>NUCLEOTIDE SEQUENCE [GENOMIC DNA] OF 136-631 (ISOFORMS 1/2)</scope>
    <scope>FUNCTION</scope>
    <source>
        <strain evidence="17">129/Sv</strain>
    </source>
</reference>
<reference evidence="16" key="7">
    <citation type="journal article" date="2002" name="Nature">
        <title>p63 and p73 are required for p53-dependent apoptosis in response to DNA damage.</title>
        <authorList>
            <person name="Flores E.R."/>
            <person name="Tsai K.Y."/>
            <person name="Crowley D."/>
            <person name="Sengupta S."/>
            <person name="Yang A."/>
            <person name="McKeon F."/>
            <person name="Jacks T."/>
        </authorList>
    </citation>
    <scope>FUNCTION</scope>
</reference>
<reference evidence="16" key="8">
    <citation type="journal article" date="2004" name="J. Clin. Pathol.">
        <title>p73alpha is a candidate effector in the p53 independent apoptosis pathway of cisplatin damaged primary murine colonocytes.</title>
        <authorList>
            <person name="Oniscu A."/>
            <person name="Sphyris N."/>
            <person name="Morris R.G."/>
            <person name="Bader S."/>
            <person name="Harrison D.J."/>
        </authorList>
    </citation>
    <scope>SUBCELLULAR LOCATION</scope>
</reference>
<reference key="9">
    <citation type="journal article" date="2006" name="J. Cell Biol.">
        <title>Transcriptional repression induces a slowly progressive atypical neuronal death associated with changes of YAP isoforms and p73.</title>
        <authorList>
            <person name="Hoshino M."/>
            <person name="Qi M.-L."/>
            <person name="Yoshimura N."/>
            <person name="Tagawa K."/>
            <person name="Wada Y.-I."/>
            <person name="Enokido Y."/>
            <person name="Marubuchi S."/>
            <person name="Harjes P."/>
            <person name="Arai N."/>
            <person name="Oyanagi K."/>
            <person name="Blandino G."/>
            <person name="Sudol M."/>
            <person name="Rich T."/>
            <person name="Kanazawa I."/>
            <person name="Wanker E.E."/>
            <person name="Saitoe M."/>
            <person name="Okazawa H."/>
        </authorList>
    </citation>
    <scope>PHOSPHORYLATION</scope>
    <scope>TISSUE SPECIFICITY</scope>
</reference>
<reference key="10">
    <citation type="journal article" date="2016" name="Cell Rep.">
        <title>p73 Is Required for Multiciliogenesis and Regulates the Foxj1-Associated Gene Network.</title>
        <authorList>
            <person name="Marshall C.B."/>
            <person name="Mays D.J."/>
            <person name="Beeler J.S."/>
            <person name="Rosenbluth J.M."/>
            <person name="Boyd K.L."/>
            <person name="Santos Guasch G.L."/>
            <person name="Shaver T.M."/>
            <person name="Tang L.J."/>
            <person name="Liu Q."/>
            <person name="Shyr Y."/>
            <person name="Venters B.J."/>
            <person name="Magnuson M.A."/>
            <person name="Pietenpol J.A."/>
        </authorList>
    </citation>
    <scope>FUNCTION</scope>
</reference>
<proteinExistence type="evidence at protein level"/>
<feature type="chain" id="PRO_0000370211" description="Tumor protein p73">
    <location>
        <begin position="1"/>
        <end position="631"/>
    </location>
</feature>
<feature type="domain" description="SAM" evidence="3">
    <location>
        <begin position="479"/>
        <end position="545"/>
    </location>
</feature>
<feature type="region of interest" description="Transactivation" evidence="2">
    <location>
        <begin position="1"/>
        <end position="43"/>
    </location>
</feature>
<feature type="region of interest" description="Disordered" evidence="4">
    <location>
        <begin position="23"/>
        <end position="43"/>
    </location>
</feature>
<feature type="region of interest" description="Disordered" evidence="4">
    <location>
        <begin position="69"/>
        <end position="113"/>
    </location>
</feature>
<feature type="region of interest" description="DNA-binding" evidence="2">
    <location>
        <begin position="123"/>
        <end position="302"/>
    </location>
</feature>
<feature type="region of interest" description="Disordered" evidence="4">
    <location>
        <begin position="306"/>
        <end position="334"/>
    </location>
</feature>
<feature type="region of interest" description="Oligomerization" evidence="3">
    <location>
        <begin position="337"/>
        <end position="378"/>
    </location>
</feature>
<feature type="region of interest" description="Interaction with HIPK2" evidence="2">
    <location>
        <begin position="337"/>
        <end position="372"/>
    </location>
</feature>
<feature type="short sequence motif" description="PPxY motif" evidence="2">
    <location>
        <begin position="477"/>
        <end position="481"/>
    </location>
</feature>
<feature type="compositionally biased region" description="Polar residues" evidence="4">
    <location>
        <begin position="30"/>
        <end position="43"/>
    </location>
</feature>
<feature type="compositionally biased region" description="Polar residues" evidence="4">
    <location>
        <begin position="86"/>
        <end position="100"/>
    </location>
</feature>
<feature type="compositionally biased region" description="Polar residues" evidence="4">
    <location>
        <begin position="306"/>
        <end position="315"/>
    </location>
</feature>
<feature type="binding site" evidence="2">
    <location>
        <position position="186"/>
    </location>
    <ligand>
        <name>Zn(2+)</name>
        <dbReference type="ChEBI" id="CHEBI:29105"/>
    </ligand>
</feature>
<feature type="binding site" evidence="2">
    <location>
        <position position="189"/>
    </location>
    <ligand>
        <name>Zn(2+)</name>
        <dbReference type="ChEBI" id="CHEBI:29105"/>
    </ligand>
</feature>
<feature type="binding site" evidence="2">
    <location>
        <position position="250"/>
    </location>
    <ligand>
        <name>Zn(2+)</name>
        <dbReference type="ChEBI" id="CHEBI:29105"/>
    </ligand>
</feature>
<feature type="binding site" evidence="2">
    <location>
        <position position="254"/>
    </location>
    <ligand>
        <name>Zn(2+)</name>
        <dbReference type="ChEBI" id="CHEBI:29105"/>
    </ligand>
</feature>
<feature type="modified residue" description="Phosphothreonine; by PLK1" evidence="2">
    <location>
        <position position="24"/>
    </location>
</feature>
<feature type="modified residue" description="Phosphotyrosine; by SRC and HCK" evidence="2">
    <location>
        <position position="25"/>
    </location>
</feature>
<feature type="modified residue" description="Phosphotyrosine; by ABL1" evidence="2">
    <location>
        <position position="91"/>
    </location>
</feature>
<feature type="cross-link" description="Glycyl lysine isopeptide (Lys-Gly) (interchain with G-Cter in SUMO); alternate" evidence="1">
    <location>
        <position position="622"/>
    </location>
</feature>
<feature type="cross-link" description="Glycyl lysine isopeptide (Lys-Gly) (interchain with G-Cter in SUMO2); alternate" evidence="2">
    <location>
        <position position="622"/>
    </location>
</feature>
<feature type="splice variant" id="VSP_053081" description="In isoform 2, isoform 3 and isoform 4." evidence="13 14 15">
    <original>MAQTSSSSSSTFEHLWSSLEPDSTYFDLPQPSQGTSEASGSEESNMDVFHLQGM</original>
    <variation>MLYVGDPMRHLAT</variation>
    <location>
        <begin position="1"/>
        <end position="54"/>
    </location>
</feature>
<feature type="splice variant" id="VSP_053082" description="In isoform 4." evidence="15">
    <location>
        <begin position="394"/>
        <end position="489"/>
    </location>
</feature>
<feature type="splice variant" id="VSP_053083" description="In isoform 3." evidence="16">
    <original>SFLTG</original>
    <variation>RTLGL</variation>
    <location>
        <begin position="489"/>
        <end position="493"/>
    </location>
</feature>
<feature type="splice variant" id="VSP_053084" description="In isoform 3." evidence="16">
    <location>
        <begin position="494"/>
        <end position="631"/>
    </location>
</feature>
<feature type="sequence conflict" description="In Ref. 2; BAB30732." evidence="16" ref="2">
    <original>H</original>
    <variation>D</variation>
    <location>
        <position position="118"/>
    </location>
</feature>
<feature type="sequence conflict" description="In Ref. 2; BAE24089." evidence="16" ref="2">
    <original>S</original>
    <variation>G</variation>
    <location>
        <position position="127"/>
    </location>
</feature>
<feature type="sequence conflict" description="In Ref. 5; AAD32213." evidence="16" ref="5">
    <original>C</original>
    <variation>S</variation>
    <location>
        <position position="254"/>
    </location>
</feature>
<feature type="sequence conflict" description="In Ref. 5; AAD32213." evidence="16" ref="5">
    <original>RG</original>
    <variation>SAS</variation>
    <location>
        <begin position="352"/>
        <end position="353"/>
    </location>
</feature>
<feature type="sequence conflict" description="In Ref. 5; AAD32213." evidence="16" ref="5">
    <original>P</original>
    <variation>H</variation>
    <location>
        <position position="376"/>
    </location>
</feature>
<name>P73_MOUSE</name>
<organism>
    <name type="scientific">Mus musculus</name>
    <name type="common">Mouse</name>
    <dbReference type="NCBI Taxonomy" id="10090"/>
    <lineage>
        <taxon>Eukaryota</taxon>
        <taxon>Metazoa</taxon>
        <taxon>Chordata</taxon>
        <taxon>Craniata</taxon>
        <taxon>Vertebrata</taxon>
        <taxon>Euteleostomi</taxon>
        <taxon>Mammalia</taxon>
        <taxon>Eutheria</taxon>
        <taxon>Euarchontoglires</taxon>
        <taxon>Glires</taxon>
        <taxon>Rodentia</taxon>
        <taxon>Myomorpha</taxon>
        <taxon>Muroidea</taxon>
        <taxon>Muridae</taxon>
        <taxon>Murinae</taxon>
        <taxon>Mus</taxon>
        <taxon>Mus</taxon>
    </lineage>
</organism>
<keyword id="KW-0010">Activator</keyword>
<keyword id="KW-0877">Alternative promoter usage</keyword>
<keyword id="KW-0025">Alternative splicing</keyword>
<keyword id="KW-0053">Apoptosis</keyword>
<keyword id="KW-0131">Cell cycle</keyword>
<keyword id="KW-0963">Cytoplasm</keyword>
<keyword id="KW-0238">DNA-binding</keyword>
<keyword id="KW-1017">Isopeptide bond</keyword>
<keyword id="KW-0479">Metal-binding</keyword>
<keyword id="KW-0539">Nucleus</keyword>
<keyword id="KW-0597">Phosphoprotein</keyword>
<keyword id="KW-1185">Reference proteome</keyword>
<keyword id="KW-0804">Transcription</keyword>
<keyword id="KW-0805">Transcription regulation</keyword>
<keyword id="KW-0043">Tumor suppressor</keyword>
<keyword id="KW-0832">Ubl conjugation</keyword>
<keyword id="KW-0862">Zinc</keyword>
<comment type="function">
    <text evidence="2 5 7 12">Participates in the apoptotic response to DNA damage. Isoforms containing the transactivation domain are pro-apoptotic, isoforms lacking the domain are anti-apoptotic and block the function of p53 and transactivating p73 isoforms. May be a tumor suppressor protein. Is an activator of FOXJ1 expression, essential for the positive regulation of lung ciliated cell differentiation (PubMed:26947080).</text>
</comment>
<comment type="cofactor">
    <cofactor evidence="2">
        <name>Zn(2+)</name>
        <dbReference type="ChEBI" id="CHEBI:29105"/>
    </cofactor>
    <text evidence="2">Binds 1 zinc ion per subunit.</text>
</comment>
<comment type="subunit">
    <text evidence="2">Found in a complex with p53/TP53 and CABLES1. The C-terminal oligomerization domain binds to the ABL1 tyrosine kinase SH3 domain. Interacts with HECW2, HIPK2, RANBP9 and WWOX (By similarity). Interacts (via SAM domain) with FBXO45 (via B30.2/SPRY domain) (By similarity). Interacts with YAP1 (phosphorylated form) (By similarity). Interacts with HCK (via SH3 domain); this inhibits TP73 activity and degradation (By similarity). Interacts (via SAM domain) with NQO1; this interaction is NADH-dependent, stabilizes TP73 in response to oxidative stress and protects it from ubiquitin-independent degradation by the 20S proteasome.</text>
</comment>
<comment type="interaction">
    <interactant intactId="EBI-1770138">
        <id>Q9JJP2</id>
    </interactant>
    <interactant intactId="EBI-1211949">
        <id>P46938</id>
        <label>Yap1</label>
    </interactant>
    <organismsDiffer>false</organismsDiffer>
    <experiments>2</experiments>
</comment>
<comment type="subcellular location">
    <subcellularLocation>
        <location evidence="8">Nucleus</location>
    </subcellularLocation>
    <subcellularLocation>
        <location evidence="1">Cytoplasm</location>
    </subcellularLocation>
    <text evidence="8">Accumulates in the nucleus in response to DNA damage.</text>
</comment>
<comment type="alternative products">
    <event type="alternative promoter"/>
    <event type="alternative splicing"/>
    <isoform>
        <id>Q9JJP2-1</id>
        <name evidence="6">1</name>
        <name evidence="2">Alpha</name>
        <sequence type="displayed"/>
    </isoform>
    <isoform>
        <id>Q9JJP2-2</id>
        <name evidence="6 9">2</name>
        <name evidence="2">dN-Alpha</name>
        <sequence type="described" ref="VSP_053081"/>
    </isoform>
    <isoform>
        <id>Q9JJP2-3</id>
        <name>3</name>
        <sequence type="described" ref="VSP_053081 VSP_053083 VSP_053084"/>
    </isoform>
    <isoform>
        <id>Q9JJP2-4</id>
        <name evidence="10">4</name>
        <sequence type="described" ref="VSP_053081 VSP_053082"/>
    </isoform>
</comment>
<comment type="tissue specificity">
    <text evidence="6 11">Found in striatal neurons of mutant huntingtin (htt) transgenic mice (at protein level). Isoform 1 is expressed in the nasal epithelium, the vomeronasal organ, the hippocampus and the hypothalamus.</text>
</comment>
<comment type="domain">
    <text evidence="1">Possesses an acidic transactivation domain, a central DNA binding domain and a C-terminal oligomerization domain that binds to the ABL1 tyrosine kinase SH3 domain.</text>
</comment>
<comment type="domain">
    <text evidence="2">The PPxY motif mediates interaction with WWOX.</text>
</comment>
<comment type="PTM">
    <text evidence="1">Sumoylated on Lys-622, which potentiates proteasomal degradation but does not affect transcriptional activity.</text>
</comment>
<comment type="PTM">
    <text evidence="1 11">Phosphorylation by PLK1 and PLK3 inhibits the transcription regulator activity and pro-apoptotic function (By similarity). Higher levels of phosphorylation seen in striatal neurons of. mutant huntingtin (htt) transgenic mice.</text>
</comment>
<comment type="PTM">
    <text evidence="1">Polyubiquitinated by RCHY1/PIRH2; leading to its degradation by the proteasome.</text>
</comment>
<comment type="disruption phenotype">
    <text evidence="6">Mice lacking Tp73 display a runting phenotype and high rates of mortality due to massive gastrointestinal hemorrhages or intracranial bleeding. The gastrointestinal tract suffers loss of enterocytes and excessive mucosecretions in the duodenum, ileum and cecum. Survivors exhibit hippocampal dysgenesis, hydrocephalus, chronic infections and inflammation, as well as abnormalities in pheromone sensory pathways.</text>
</comment>
<comment type="miscellaneous">
    <text evidence="2">Activated and stabilized by interaction with RANBP9.</text>
</comment>
<comment type="miscellaneous">
    <molecule>Isoform 2</molecule>
    <text evidence="6 16">Produced by alternative promoter usage.</text>
</comment>
<comment type="miscellaneous">
    <molecule>Isoform 3</molecule>
    <text evidence="6 16">Produced by alternative splicing of isoform 2.</text>
</comment>
<comment type="miscellaneous">
    <molecule>Isoform 4</molecule>
    <text evidence="6 16">Produced by alternative splicing of isoform 2.</text>
</comment>
<comment type="similarity">
    <text evidence="2">Belongs to the p53 family.</text>
</comment>
<comment type="sequence caution" evidence="16">
    <conflict type="erroneous initiation">
        <sequence resource="EMBL-CDS" id="CAM18775"/>
    </conflict>
    <text>Extended N-terminus.</text>
</comment>
<evidence type="ECO:0000250" key="1"/>
<evidence type="ECO:0000250" key="2">
    <source>
        <dbReference type="UniProtKB" id="O15350"/>
    </source>
</evidence>
<evidence type="ECO:0000255" key="3"/>
<evidence type="ECO:0000256" key="4">
    <source>
        <dbReference type="SAM" id="MobiDB-lite"/>
    </source>
</evidence>
<evidence type="ECO:0000269" key="5">
    <source>
    </source>
</evidence>
<evidence type="ECO:0000269" key="6">
    <source>
    </source>
</evidence>
<evidence type="ECO:0000269" key="7">
    <source>
    </source>
</evidence>
<evidence type="ECO:0000269" key="8">
    <source>
    </source>
</evidence>
<evidence type="ECO:0000269" key="9">
    <source>
    </source>
</evidence>
<evidence type="ECO:0000269" key="10">
    <source>
    </source>
</evidence>
<evidence type="ECO:0000269" key="11">
    <source>
    </source>
</evidence>
<evidence type="ECO:0000269" key="12">
    <source>
    </source>
</evidence>
<evidence type="ECO:0000303" key="13">
    <source>
    </source>
</evidence>
<evidence type="ECO:0000303" key="14">
    <source>
    </source>
</evidence>
<evidence type="ECO:0000303" key="15">
    <source>
    </source>
</evidence>
<evidence type="ECO:0000305" key="16"/>
<evidence type="ECO:0000312" key="17">
    <source>
        <dbReference type="EMBL" id="AAD32213.1"/>
    </source>
</evidence>
<evidence type="ECO:0000312" key="18">
    <source>
        <dbReference type="EMBL" id="AAH66045.1"/>
    </source>
</evidence>
<evidence type="ECO:0000312" key="19">
    <source>
        <dbReference type="EMBL" id="BAB30732.1"/>
    </source>
</evidence>
<evidence type="ECO:0000312" key="20">
    <source>
        <dbReference type="EMBL" id="BAE24089.1"/>
    </source>
</evidence>
<evidence type="ECO:0000312" key="21">
    <source>
        <dbReference type="EMBL" id="CAB81953.1"/>
    </source>
</evidence>
<evidence type="ECO:0000312" key="22">
    <source>
        <dbReference type="EMBL" id="CAM18775.1"/>
    </source>
</evidence>
<evidence type="ECO:0000312" key="23">
    <source>
        <dbReference type="MGI" id="MGI:1336991"/>
    </source>
</evidence>
<sequence>MAQTSSSSSSTFEHLWSSLEPDSTYFDLPQPSQGTSEASGSEESNMDVFHLQGMAQFNLLSSAMDQMGSRAAPASPYTPEHAASAPTHSPYAQPSSTFDTMSPAPVIPSNTDYPGPHHFEVTFQQSSTAKSATWTYSPLLKKLYCQIAKTCPIQIKVSTPPPPGTAIRAMPVYKKAEHVTDIVKRCPNHELGRDFNEGQSAPASHLIRVEGNNLAQYVDDPVTGRQSVVVPYEPPQVGTEFTTILYNFMCNSSCVGGMNRRPILVIITLETRDGQVLGRRSFEGRICACPGRDRKADEDHYREQQALNESTTKNGAASKRAFKQSPPAIPALGTNVKKRRHGDEDMFYMHVRGRENFEILMKVKESLELMELVPQPLVDSYRQQQQQQLLQRPSHLQPPSYGPVLSPMNKVHGGVNKLPSVNQLVGQPPPHSSAAGPNLGPMGSGMLNSHGHSMPANGEMNGGHSSQTMVSGSHCTPPPPYHADPSLVSFLTGLGCPNCIECFTSQGLQSIYHLQNLTIEDLGALKVPDQYRMTIWRGLQDLKQSHDCGQQLLRSSSNAATISIGGSGELQRQRVMEAVHFRVRHTITIPNRGGAGAVTGPDEWADFGFDLPDCKSRKQPIKEEFTETESH</sequence>
<protein>
    <recommendedName>
        <fullName evidence="2">Tumor protein p73</fullName>
    </recommendedName>
    <alternativeName>
        <fullName evidence="2">p53-like transcription factor</fullName>
    </alternativeName>
    <alternativeName>
        <fullName evidence="2">p53-related protein</fullName>
    </alternativeName>
</protein>